<organism>
    <name type="scientific">Rattus norvegicus</name>
    <name type="common">Rat</name>
    <dbReference type="NCBI Taxonomy" id="10116"/>
    <lineage>
        <taxon>Eukaryota</taxon>
        <taxon>Metazoa</taxon>
        <taxon>Chordata</taxon>
        <taxon>Craniata</taxon>
        <taxon>Vertebrata</taxon>
        <taxon>Euteleostomi</taxon>
        <taxon>Mammalia</taxon>
        <taxon>Eutheria</taxon>
        <taxon>Euarchontoglires</taxon>
        <taxon>Glires</taxon>
        <taxon>Rodentia</taxon>
        <taxon>Myomorpha</taxon>
        <taxon>Muroidea</taxon>
        <taxon>Muridae</taxon>
        <taxon>Murinae</taxon>
        <taxon>Rattus</taxon>
    </lineage>
</organism>
<accession>Q5U310</accession>
<dbReference type="EMBL" id="BC085780">
    <property type="protein sequence ID" value="AAH85780.1"/>
    <property type="molecule type" value="mRNA"/>
</dbReference>
<dbReference type="RefSeq" id="NP_001019538.1">
    <property type="nucleotide sequence ID" value="NM_001024367.1"/>
</dbReference>
<dbReference type="RefSeq" id="XP_006257305.1">
    <property type="nucleotide sequence ID" value="XM_006257243.5"/>
</dbReference>
<dbReference type="RefSeq" id="XP_006257315.1">
    <property type="nucleotide sequence ID" value="XM_006257253.3"/>
</dbReference>
<dbReference type="RefSeq" id="XP_017457844.1">
    <property type="nucleotide sequence ID" value="XM_017602355.1"/>
</dbReference>
<dbReference type="RefSeq" id="XP_038955908.1">
    <property type="nucleotide sequence ID" value="XM_039099980.2"/>
</dbReference>
<dbReference type="SMR" id="Q5U310"/>
<dbReference type="FunCoup" id="Q5U310">
    <property type="interactions" value="1174"/>
</dbReference>
<dbReference type="STRING" id="10116.ENSRNOP00000030952"/>
<dbReference type="PhosphoSitePlus" id="Q5U310"/>
<dbReference type="PaxDb" id="10116-ENSRNOP00000030952"/>
<dbReference type="Ensembl" id="ENSRNOT00000029833.7">
    <property type="protein sequence ID" value="ENSRNOP00000030952.5"/>
    <property type="gene ID" value="ENSRNOG00000046862.3"/>
</dbReference>
<dbReference type="Ensembl" id="ENSRNOT00000052422.6">
    <property type="protein sequence ID" value="ENSRNOP00000043675.3"/>
    <property type="gene ID" value="ENSRNOG00000046862.3"/>
</dbReference>
<dbReference type="GeneID" id="501619"/>
<dbReference type="KEGG" id="rno:501619"/>
<dbReference type="UCSC" id="RGD:1561629">
    <property type="organism name" value="rat"/>
</dbReference>
<dbReference type="AGR" id="RGD:1561629"/>
<dbReference type="CTD" id="51309"/>
<dbReference type="RGD" id="1561629">
    <property type="gene designation" value="Armcx1"/>
</dbReference>
<dbReference type="eggNOG" id="ENOG502QYZW">
    <property type="taxonomic scope" value="Eukaryota"/>
</dbReference>
<dbReference type="GeneTree" id="ENSGT00940000162561"/>
<dbReference type="HOGENOM" id="CLU_037187_0_0_1"/>
<dbReference type="InParanoid" id="Q5U310"/>
<dbReference type="OMA" id="CDDTVIC"/>
<dbReference type="OrthoDB" id="10017790at2759"/>
<dbReference type="PhylomeDB" id="Q5U310"/>
<dbReference type="TreeFam" id="TF335652"/>
<dbReference type="PRO" id="PR:Q5U310"/>
<dbReference type="Proteomes" id="UP000002494">
    <property type="component" value="Chromosome X"/>
</dbReference>
<dbReference type="Bgee" id="ENSRNOG00000037709">
    <property type="expression patterns" value="Expressed in cerebellum and 18 other cell types or tissues"/>
</dbReference>
<dbReference type="GO" id="GO:0005741">
    <property type="term" value="C:mitochondrial outer membrane"/>
    <property type="evidence" value="ECO:0007669"/>
    <property type="project" value="UniProtKB-SubCell"/>
</dbReference>
<dbReference type="GO" id="GO:0005739">
    <property type="term" value="C:mitochondrion"/>
    <property type="evidence" value="ECO:0000318"/>
    <property type="project" value="GO_Central"/>
</dbReference>
<dbReference type="GO" id="GO:0061484">
    <property type="term" value="P:hematopoietic stem cell homeostasis"/>
    <property type="evidence" value="ECO:0000266"/>
    <property type="project" value="RGD"/>
</dbReference>
<dbReference type="Gene3D" id="1.25.10.10">
    <property type="entry name" value="Leucine-rich Repeat Variant"/>
    <property type="match status" value="1"/>
</dbReference>
<dbReference type="InterPro" id="IPR011989">
    <property type="entry name" value="ARM-like"/>
</dbReference>
<dbReference type="InterPro" id="IPR006911">
    <property type="entry name" value="ARM-rpt_dom"/>
</dbReference>
<dbReference type="InterPro" id="IPR016024">
    <property type="entry name" value="ARM-type_fold"/>
</dbReference>
<dbReference type="InterPro" id="IPR000225">
    <property type="entry name" value="Armadillo"/>
</dbReference>
<dbReference type="InterPro" id="IPR051303">
    <property type="entry name" value="Armcx_regulator"/>
</dbReference>
<dbReference type="PANTHER" id="PTHR15712">
    <property type="entry name" value="ARMADILLO REPEAT CONTAINING PROTEIN"/>
    <property type="match status" value="1"/>
</dbReference>
<dbReference type="PANTHER" id="PTHR15712:SF14">
    <property type="entry name" value="ARMADILLO REPEAT-CONTAINING X-LINKED PROTEIN 1"/>
    <property type="match status" value="1"/>
</dbReference>
<dbReference type="Pfam" id="PF04826">
    <property type="entry name" value="Arm_2"/>
    <property type="match status" value="1"/>
</dbReference>
<dbReference type="SMART" id="SM00185">
    <property type="entry name" value="ARM"/>
    <property type="match status" value="2"/>
</dbReference>
<dbReference type="SUPFAM" id="SSF48371">
    <property type="entry name" value="ARM repeat"/>
    <property type="match status" value="1"/>
</dbReference>
<dbReference type="PROSITE" id="PS50176">
    <property type="entry name" value="ARM_REPEAT"/>
    <property type="match status" value="1"/>
</dbReference>
<gene>
    <name type="primary">Armcx1</name>
</gene>
<keyword id="KW-0472">Membrane</keyword>
<keyword id="KW-0496">Mitochondrion</keyword>
<keyword id="KW-1000">Mitochondrion outer membrane</keyword>
<keyword id="KW-1185">Reference proteome</keyword>
<keyword id="KW-0677">Repeat</keyword>
<keyword id="KW-0735">Signal-anchor</keyword>
<keyword id="KW-0812">Transmembrane</keyword>
<keyword id="KW-1133">Transmembrane helix</keyword>
<sequence>MGRTREAGCVAAGMVIGAGACYCVYRLTWGKDENEKLWDDEDEEEEEEEESCSGKPEIGGKTVKERKTHVGVGAGAKPQDDSKSKAEANVGPENGPDVKKEVYPESHSEGGLEAKAKALFKSLKEQASAKAGRGIRFPNISRIRTLTSSLPCPGGRGGGCHPGRTGSRARNRTSGKVKRKNRSKSNKAPATAWPVRRGKFSFPYKIDDILSAPDLQKVLNILERTNDPFTQEVALVTLGNNAAYSFNQNAIRELGGVPIIAKLIKTRDPIIREKTYNALNNLSVNSENQGKIKTYISQVCDDTMVCRLDSAVQMAGLRLLTNMTVTNHYQHLLSYSFPDFFALLFLGNHFTKIQTMKLIINFTENPAMTRELVSCKVPSELISLFNKEWDREILLNILTLFENINDNIKSEGLASSRKEFSRSSLFFLFKESGVCVKKIKALASHKDLVVKVKVLKVLTKL</sequence>
<name>ARMX1_RAT</name>
<feature type="chain" id="PRO_0000191363" description="Armadillo repeat-containing X-linked protein 1">
    <location>
        <begin position="1"/>
        <end position="461"/>
    </location>
</feature>
<feature type="topological domain" description="Mitochondrial intermembrane" evidence="1">
    <location>
        <begin position="1"/>
        <end position="6"/>
    </location>
</feature>
<feature type="transmembrane region" description="Helical; Signal-anchor" evidence="3">
    <location>
        <begin position="7"/>
        <end position="29"/>
    </location>
</feature>
<feature type="topological domain" description="Cytoplasmic" evidence="1">
    <location>
        <begin position="30"/>
        <end position="461"/>
    </location>
</feature>
<feature type="repeat" description="ARM 1" evidence="3">
    <location>
        <begin position="203"/>
        <end position="243"/>
    </location>
</feature>
<feature type="repeat" description="ARM 2" evidence="3">
    <location>
        <begin position="245"/>
        <end position="284"/>
    </location>
</feature>
<feature type="repeat" description="ARM 3" evidence="3">
    <location>
        <begin position="366"/>
        <end position="406"/>
    </location>
</feature>
<feature type="repeat" description="ARM 4" evidence="3">
    <location>
        <begin position="423"/>
        <end position="461"/>
    </location>
</feature>
<feature type="region of interest" description="Mitochondrion outer membrane (MOM)-targeting sequence" evidence="5">
    <location>
        <begin position="1"/>
        <end position="6"/>
    </location>
</feature>
<feature type="region of interest" description="Mitochondrion outer membrane (MOM)-targeting sequence" evidence="5">
    <location>
        <begin position="26"/>
        <end position="36"/>
    </location>
</feature>
<feature type="region of interest" description="Disordered" evidence="4">
    <location>
        <begin position="34"/>
        <end position="110"/>
    </location>
</feature>
<feature type="region of interest" description="Disordered" evidence="4">
    <location>
        <begin position="148"/>
        <end position="192"/>
    </location>
</feature>
<feature type="compositionally biased region" description="Acidic residues" evidence="4">
    <location>
        <begin position="38"/>
        <end position="51"/>
    </location>
</feature>
<feature type="compositionally biased region" description="Basic and acidic residues" evidence="4">
    <location>
        <begin position="96"/>
        <end position="110"/>
    </location>
</feature>
<feature type="compositionally biased region" description="Basic residues" evidence="4">
    <location>
        <begin position="167"/>
        <end position="185"/>
    </location>
</feature>
<reference key="1">
    <citation type="journal article" date="2004" name="Genome Res.">
        <title>The status, quality, and expansion of the NIH full-length cDNA project: the Mammalian Gene Collection (MGC).</title>
        <authorList>
            <consortium name="The MGC Project Team"/>
        </authorList>
    </citation>
    <scope>NUCLEOTIDE SEQUENCE [LARGE SCALE MRNA]</scope>
    <source>
        <tissue>Kidney</tissue>
    </source>
</reference>
<proteinExistence type="evidence at transcript level"/>
<comment type="function">
    <text evidence="2">Regulates mitochondrial transport during axon regeneration. Increases the proportion of motile mitochondria by recruiting stationary mitochondria into the motile pool. Enhances mitochondria movement and neurite growth in both adult axons and embryonic neurons. Promotes neuronal survival and axon regeneration after nerve injury. May link mitochondria to the Trak1-kinesin motor complex via its interaction with MIRO1.</text>
</comment>
<comment type="subunit">
    <text evidence="2">Interacts with MIRO1.</text>
</comment>
<comment type="subcellular location">
    <subcellularLocation>
        <location evidence="2">Mitochondrion</location>
    </subcellularLocation>
    <subcellularLocation>
        <location evidence="2">Mitochondrion outer membrane</location>
        <topology evidence="3">Single-pass membrane protein</topology>
    </subcellularLocation>
</comment>
<comment type="similarity">
    <text evidence="5">Belongs to the eutherian X-chromosome-specific Armcx family.</text>
</comment>
<protein>
    <recommendedName>
        <fullName>Armadillo repeat-containing X-linked protein 1</fullName>
    </recommendedName>
</protein>
<evidence type="ECO:0000250" key="1">
    <source>
        <dbReference type="UniProtKB" id="Q8BHS6"/>
    </source>
</evidence>
<evidence type="ECO:0000250" key="2">
    <source>
        <dbReference type="UniProtKB" id="Q9CX83"/>
    </source>
</evidence>
<evidence type="ECO:0000255" key="3"/>
<evidence type="ECO:0000256" key="4">
    <source>
        <dbReference type="SAM" id="MobiDB-lite"/>
    </source>
</evidence>
<evidence type="ECO:0000305" key="5"/>